<proteinExistence type="inferred from homology"/>
<reference key="1">
    <citation type="journal article" date="2004" name="Nat. Biotechnol.">
        <title>Complete genome sequence of the metabolically versatile photosynthetic bacterium Rhodopseudomonas palustris.</title>
        <authorList>
            <person name="Larimer F.W."/>
            <person name="Chain P."/>
            <person name="Hauser L."/>
            <person name="Lamerdin J.E."/>
            <person name="Malfatti S."/>
            <person name="Do L."/>
            <person name="Land M.L."/>
            <person name="Pelletier D.A."/>
            <person name="Beatty J.T."/>
            <person name="Lang A.S."/>
            <person name="Tabita F.R."/>
            <person name="Gibson J.L."/>
            <person name="Hanson T.E."/>
            <person name="Bobst C."/>
            <person name="Torres y Torres J.L."/>
            <person name="Peres C."/>
            <person name="Harrison F.H."/>
            <person name="Gibson J."/>
            <person name="Harwood C.S."/>
        </authorList>
    </citation>
    <scope>NUCLEOTIDE SEQUENCE [LARGE SCALE GENOMIC DNA]</scope>
    <source>
        <strain>ATCC BAA-98 / CGA009</strain>
    </source>
</reference>
<dbReference type="EC" id="3.6.5.-" evidence="1"/>
<dbReference type="EMBL" id="BX572593">
    <property type="protein sequence ID" value="CAE25606.1"/>
    <property type="molecule type" value="Genomic_DNA"/>
</dbReference>
<dbReference type="SMR" id="Q6NDE6"/>
<dbReference type="STRING" id="258594.RPA0162"/>
<dbReference type="eggNOG" id="COG0536">
    <property type="taxonomic scope" value="Bacteria"/>
</dbReference>
<dbReference type="HOGENOM" id="CLU_011747_2_0_5"/>
<dbReference type="PhylomeDB" id="Q6NDE6"/>
<dbReference type="GO" id="GO:0005737">
    <property type="term" value="C:cytoplasm"/>
    <property type="evidence" value="ECO:0007669"/>
    <property type="project" value="UniProtKB-SubCell"/>
</dbReference>
<dbReference type="GO" id="GO:0005525">
    <property type="term" value="F:GTP binding"/>
    <property type="evidence" value="ECO:0007669"/>
    <property type="project" value="UniProtKB-UniRule"/>
</dbReference>
<dbReference type="GO" id="GO:0003924">
    <property type="term" value="F:GTPase activity"/>
    <property type="evidence" value="ECO:0007669"/>
    <property type="project" value="UniProtKB-UniRule"/>
</dbReference>
<dbReference type="GO" id="GO:0000287">
    <property type="term" value="F:magnesium ion binding"/>
    <property type="evidence" value="ECO:0007669"/>
    <property type="project" value="InterPro"/>
</dbReference>
<dbReference type="GO" id="GO:0042254">
    <property type="term" value="P:ribosome biogenesis"/>
    <property type="evidence" value="ECO:0007669"/>
    <property type="project" value="UniProtKB-UniRule"/>
</dbReference>
<dbReference type="CDD" id="cd01898">
    <property type="entry name" value="Obg"/>
    <property type="match status" value="1"/>
</dbReference>
<dbReference type="FunFam" id="2.70.210.12:FF:000001">
    <property type="entry name" value="GTPase Obg"/>
    <property type="match status" value="1"/>
</dbReference>
<dbReference type="Gene3D" id="2.70.210.12">
    <property type="entry name" value="GTP1/OBG domain"/>
    <property type="match status" value="1"/>
</dbReference>
<dbReference type="Gene3D" id="3.40.50.300">
    <property type="entry name" value="P-loop containing nucleotide triphosphate hydrolases"/>
    <property type="match status" value="1"/>
</dbReference>
<dbReference type="HAMAP" id="MF_01454">
    <property type="entry name" value="GTPase_Obg"/>
    <property type="match status" value="1"/>
</dbReference>
<dbReference type="InterPro" id="IPR031167">
    <property type="entry name" value="G_OBG"/>
</dbReference>
<dbReference type="InterPro" id="IPR006073">
    <property type="entry name" value="GTP-bd"/>
</dbReference>
<dbReference type="InterPro" id="IPR014100">
    <property type="entry name" value="GTP-bd_Obg/CgtA"/>
</dbReference>
<dbReference type="InterPro" id="IPR006074">
    <property type="entry name" value="GTP1-OBG_CS"/>
</dbReference>
<dbReference type="InterPro" id="IPR006169">
    <property type="entry name" value="GTP1_OBG_dom"/>
</dbReference>
<dbReference type="InterPro" id="IPR036726">
    <property type="entry name" value="GTP1_OBG_dom_sf"/>
</dbReference>
<dbReference type="InterPro" id="IPR045086">
    <property type="entry name" value="OBG_GTPase"/>
</dbReference>
<dbReference type="InterPro" id="IPR027417">
    <property type="entry name" value="P-loop_NTPase"/>
</dbReference>
<dbReference type="NCBIfam" id="TIGR02729">
    <property type="entry name" value="Obg_CgtA"/>
    <property type="match status" value="1"/>
</dbReference>
<dbReference type="NCBIfam" id="NF008955">
    <property type="entry name" value="PRK12297.1"/>
    <property type="match status" value="1"/>
</dbReference>
<dbReference type="NCBIfam" id="NF008956">
    <property type="entry name" value="PRK12299.1"/>
    <property type="match status" value="1"/>
</dbReference>
<dbReference type="PANTHER" id="PTHR11702">
    <property type="entry name" value="DEVELOPMENTALLY REGULATED GTP-BINDING PROTEIN-RELATED"/>
    <property type="match status" value="1"/>
</dbReference>
<dbReference type="PANTHER" id="PTHR11702:SF31">
    <property type="entry name" value="MITOCHONDRIAL RIBOSOME-ASSOCIATED GTPASE 2"/>
    <property type="match status" value="1"/>
</dbReference>
<dbReference type="Pfam" id="PF01018">
    <property type="entry name" value="GTP1_OBG"/>
    <property type="match status" value="1"/>
</dbReference>
<dbReference type="Pfam" id="PF01926">
    <property type="entry name" value="MMR_HSR1"/>
    <property type="match status" value="1"/>
</dbReference>
<dbReference type="PIRSF" id="PIRSF002401">
    <property type="entry name" value="GTP_bd_Obg/CgtA"/>
    <property type="match status" value="1"/>
</dbReference>
<dbReference type="PRINTS" id="PR00326">
    <property type="entry name" value="GTP1OBG"/>
</dbReference>
<dbReference type="SUPFAM" id="SSF82051">
    <property type="entry name" value="Obg GTP-binding protein N-terminal domain"/>
    <property type="match status" value="1"/>
</dbReference>
<dbReference type="SUPFAM" id="SSF52540">
    <property type="entry name" value="P-loop containing nucleoside triphosphate hydrolases"/>
    <property type="match status" value="1"/>
</dbReference>
<dbReference type="PROSITE" id="PS51710">
    <property type="entry name" value="G_OBG"/>
    <property type="match status" value="1"/>
</dbReference>
<dbReference type="PROSITE" id="PS00905">
    <property type="entry name" value="GTP1_OBG"/>
    <property type="match status" value="1"/>
</dbReference>
<dbReference type="PROSITE" id="PS51883">
    <property type="entry name" value="OBG"/>
    <property type="match status" value="1"/>
</dbReference>
<name>OBG_RHOPA</name>
<sequence length="353" mass="37743">MKFLDEAKVYIRSGDGGNGCVAFRREKFIEFGGPNGGNGGRGGDIIVEAADGLNTLIDYRYQQHFKAQKGGNGMGSDRHGAGGKDIVMKVPVGTQIFDEDKETLIHDFTKVGERFVLAKGGNGGFGNAHFKSSTNRAPRHANPGLPGEERWIWLRLKLIADAGLVGLPNAGKSTFLSKVSAAKPKIADYPFTTLHPQLGVVNSDGREFVLADIPGLIEGAHEGAGLGDRFLGHIERCRVLLHLIDATCEHAGKAYKTVRGELEAYAETLVDKIEIVALNKIDAVEPDELKKQKDRLKRAAKKTPLLLSGVTGQGVPEALRALVAVIGEAPVSDKAIGTADNPAEAKPWAPQDA</sequence>
<evidence type="ECO:0000255" key="1">
    <source>
        <dbReference type="HAMAP-Rule" id="MF_01454"/>
    </source>
</evidence>
<evidence type="ECO:0000255" key="2">
    <source>
        <dbReference type="PROSITE-ProRule" id="PRU01231"/>
    </source>
</evidence>
<organism>
    <name type="scientific">Rhodopseudomonas palustris (strain ATCC BAA-98 / CGA009)</name>
    <dbReference type="NCBI Taxonomy" id="258594"/>
    <lineage>
        <taxon>Bacteria</taxon>
        <taxon>Pseudomonadati</taxon>
        <taxon>Pseudomonadota</taxon>
        <taxon>Alphaproteobacteria</taxon>
        <taxon>Hyphomicrobiales</taxon>
        <taxon>Nitrobacteraceae</taxon>
        <taxon>Rhodopseudomonas</taxon>
    </lineage>
</organism>
<accession>Q6NDE6</accession>
<protein>
    <recommendedName>
        <fullName evidence="1">GTPase Obg</fullName>
        <ecNumber evidence="1">3.6.5.-</ecNumber>
    </recommendedName>
    <alternativeName>
        <fullName evidence="1">GTP-binding protein Obg</fullName>
    </alternativeName>
</protein>
<comment type="function">
    <text evidence="1">An essential GTPase which binds GTP, GDP and possibly (p)ppGpp with moderate affinity, with high nucleotide exchange rates and a fairly low GTP hydrolysis rate. Plays a role in control of the cell cycle, stress response, ribosome biogenesis and in those bacteria that undergo differentiation, in morphogenesis control.</text>
</comment>
<comment type="cofactor">
    <cofactor evidence="1">
        <name>Mg(2+)</name>
        <dbReference type="ChEBI" id="CHEBI:18420"/>
    </cofactor>
</comment>
<comment type="subunit">
    <text evidence="1">Monomer.</text>
</comment>
<comment type="subcellular location">
    <subcellularLocation>
        <location evidence="1">Cytoplasm</location>
    </subcellularLocation>
</comment>
<comment type="similarity">
    <text evidence="1">Belongs to the TRAFAC class OBG-HflX-like GTPase superfamily. OBG GTPase family.</text>
</comment>
<feature type="chain" id="PRO_0000386190" description="GTPase Obg">
    <location>
        <begin position="1"/>
        <end position="353"/>
    </location>
</feature>
<feature type="domain" description="Obg" evidence="2">
    <location>
        <begin position="1"/>
        <end position="159"/>
    </location>
</feature>
<feature type="domain" description="OBG-type G" evidence="1">
    <location>
        <begin position="160"/>
        <end position="327"/>
    </location>
</feature>
<feature type="binding site" evidence="1">
    <location>
        <begin position="166"/>
        <end position="173"/>
    </location>
    <ligand>
        <name>GTP</name>
        <dbReference type="ChEBI" id="CHEBI:37565"/>
    </ligand>
</feature>
<feature type="binding site" evidence="1">
    <location>
        <position position="173"/>
    </location>
    <ligand>
        <name>Mg(2+)</name>
        <dbReference type="ChEBI" id="CHEBI:18420"/>
    </ligand>
</feature>
<feature type="binding site" evidence="1">
    <location>
        <begin position="191"/>
        <end position="195"/>
    </location>
    <ligand>
        <name>GTP</name>
        <dbReference type="ChEBI" id="CHEBI:37565"/>
    </ligand>
</feature>
<feature type="binding site" evidence="1">
    <location>
        <position position="193"/>
    </location>
    <ligand>
        <name>Mg(2+)</name>
        <dbReference type="ChEBI" id="CHEBI:18420"/>
    </ligand>
</feature>
<feature type="binding site" evidence="1">
    <location>
        <begin position="212"/>
        <end position="215"/>
    </location>
    <ligand>
        <name>GTP</name>
        <dbReference type="ChEBI" id="CHEBI:37565"/>
    </ligand>
</feature>
<feature type="binding site" evidence="1">
    <location>
        <begin position="279"/>
        <end position="282"/>
    </location>
    <ligand>
        <name>GTP</name>
        <dbReference type="ChEBI" id="CHEBI:37565"/>
    </ligand>
</feature>
<feature type="binding site" evidence="1">
    <location>
        <begin position="308"/>
        <end position="310"/>
    </location>
    <ligand>
        <name>GTP</name>
        <dbReference type="ChEBI" id="CHEBI:37565"/>
    </ligand>
</feature>
<gene>
    <name evidence="1" type="primary">obg</name>
    <name type="ordered locus">RPA0162</name>
</gene>
<keyword id="KW-0963">Cytoplasm</keyword>
<keyword id="KW-0342">GTP-binding</keyword>
<keyword id="KW-0378">Hydrolase</keyword>
<keyword id="KW-0460">Magnesium</keyword>
<keyword id="KW-0479">Metal-binding</keyword>
<keyword id="KW-0547">Nucleotide-binding</keyword>